<keyword id="KW-0067">ATP-binding</keyword>
<keyword id="KW-0173">Coenzyme A biosynthesis</keyword>
<keyword id="KW-0963">Cytoplasm</keyword>
<keyword id="KW-0460">Magnesium</keyword>
<keyword id="KW-0547">Nucleotide-binding</keyword>
<keyword id="KW-0548">Nucleotidyltransferase</keyword>
<keyword id="KW-0808">Transferase</keyword>
<reference key="1">
    <citation type="journal article" date="2009" name="PLoS Genet.">
        <title>Organised genome dynamics in the Escherichia coli species results in highly diverse adaptive paths.</title>
        <authorList>
            <person name="Touchon M."/>
            <person name="Hoede C."/>
            <person name="Tenaillon O."/>
            <person name="Barbe V."/>
            <person name="Baeriswyl S."/>
            <person name="Bidet P."/>
            <person name="Bingen E."/>
            <person name="Bonacorsi S."/>
            <person name="Bouchier C."/>
            <person name="Bouvet O."/>
            <person name="Calteau A."/>
            <person name="Chiapello H."/>
            <person name="Clermont O."/>
            <person name="Cruveiller S."/>
            <person name="Danchin A."/>
            <person name="Diard M."/>
            <person name="Dossat C."/>
            <person name="Karoui M.E."/>
            <person name="Frapy E."/>
            <person name="Garry L."/>
            <person name="Ghigo J.M."/>
            <person name="Gilles A.M."/>
            <person name="Johnson J."/>
            <person name="Le Bouguenec C."/>
            <person name="Lescat M."/>
            <person name="Mangenot S."/>
            <person name="Martinez-Jehanne V."/>
            <person name="Matic I."/>
            <person name="Nassif X."/>
            <person name="Oztas S."/>
            <person name="Petit M.A."/>
            <person name="Pichon C."/>
            <person name="Rouy Z."/>
            <person name="Ruf C.S."/>
            <person name="Schneider D."/>
            <person name="Tourret J."/>
            <person name="Vacherie B."/>
            <person name="Vallenet D."/>
            <person name="Medigue C."/>
            <person name="Rocha E.P.C."/>
            <person name="Denamur E."/>
        </authorList>
    </citation>
    <scope>NUCLEOTIDE SEQUENCE [LARGE SCALE GENOMIC DNA]</scope>
    <source>
        <strain>ED1a</strain>
    </source>
</reference>
<evidence type="ECO:0000255" key="1">
    <source>
        <dbReference type="HAMAP-Rule" id="MF_00151"/>
    </source>
</evidence>
<name>COAD_ECO81</name>
<accession>B7N1T5</accession>
<feature type="chain" id="PRO_1000123287" description="Phosphopantetheine adenylyltransferase">
    <location>
        <begin position="1"/>
        <end position="159"/>
    </location>
</feature>
<feature type="binding site" evidence="1">
    <location>
        <begin position="10"/>
        <end position="11"/>
    </location>
    <ligand>
        <name>ATP</name>
        <dbReference type="ChEBI" id="CHEBI:30616"/>
    </ligand>
</feature>
<feature type="binding site" evidence="1">
    <location>
        <position position="10"/>
    </location>
    <ligand>
        <name>substrate</name>
    </ligand>
</feature>
<feature type="binding site" evidence="1">
    <location>
        <position position="18"/>
    </location>
    <ligand>
        <name>ATP</name>
        <dbReference type="ChEBI" id="CHEBI:30616"/>
    </ligand>
</feature>
<feature type="binding site" evidence="1">
    <location>
        <position position="42"/>
    </location>
    <ligand>
        <name>substrate</name>
    </ligand>
</feature>
<feature type="binding site" evidence="1">
    <location>
        <position position="74"/>
    </location>
    <ligand>
        <name>substrate</name>
    </ligand>
</feature>
<feature type="binding site" evidence="1">
    <location>
        <position position="88"/>
    </location>
    <ligand>
        <name>substrate</name>
    </ligand>
</feature>
<feature type="binding site" evidence="1">
    <location>
        <begin position="89"/>
        <end position="91"/>
    </location>
    <ligand>
        <name>ATP</name>
        <dbReference type="ChEBI" id="CHEBI:30616"/>
    </ligand>
</feature>
<feature type="binding site" evidence="1">
    <location>
        <position position="99"/>
    </location>
    <ligand>
        <name>ATP</name>
        <dbReference type="ChEBI" id="CHEBI:30616"/>
    </ligand>
</feature>
<feature type="binding site" evidence="1">
    <location>
        <begin position="124"/>
        <end position="130"/>
    </location>
    <ligand>
        <name>ATP</name>
        <dbReference type="ChEBI" id="CHEBI:30616"/>
    </ligand>
</feature>
<feature type="site" description="Transition state stabilizer" evidence="1">
    <location>
        <position position="18"/>
    </location>
</feature>
<organism>
    <name type="scientific">Escherichia coli O81 (strain ED1a)</name>
    <dbReference type="NCBI Taxonomy" id="585397"/>
    <lineage>
        <taxon>Bacteria</taxon>
        <taxon>Pseudomonadati</taxon>
        <taxon>Pseudomonadota</taxon>
        <taxon>Gammaproteobacteria</taxon>
        <taxon>Enterobacterales</taxon>
        <taxon>Enterobacteriaceae</taxon>
        <taxon>Escherichia</taxon>
    </lineage>
</organism>
<comment type="function">
    <text evidence="1">Reversibly transfers an adenylyl group from ATP to 4'-phosphopantetheine, yielding dephospho-CoA (dPCoA) and pyrophosphate.</text>
</comment>
<comment type="catalytic activity">
    <reaction evidence="1">
        <text>(R)-4'-phosphopantetheine + ATP + H(+) = 3'-dephospho-CoA + diphosphate</text>
        <dbReference type="Rhea" id="RHEA:19801"/>
        <dbReference type="ChEBI" id="CHEBI:15378"/>
        <dbReference type="ChEBI" id="CHEBI:30616"/>
        <dbReference type="ChEBI" id="CHEBI:33019"/>
        <dbReference type="ChEBI" id="CHEBI:57328"/>
        <dbReference type="ChEBI" id="CHEBI:61723"/>
        <dbReference type="EC" id="2.7.7.3"/>
    </reaction>
</comment>
<comment type="cofactor">
    <cofactor evidence="1">
        <name>Mg(2+)</name>
        <dbReference type="ChEBI" id="CHEBI:18420"/>
    </cofactor>
</comment>
<comment type="pathway">
    <text evidence="1">Cofactor biosynthesis; coenzyme A biosynthesis; CoA from (R)-pantothenate: step 4/5.</text>
</comment>
<comment type="subunit">
    <text evidence="1">Homohexamer.</text>
</comment>
<comment type="subcellular location">
    <subcellularLocation>
        <location evidence="1">Cytoplasm</location>
    </subcellularLocation>
</comment>
<comment type="similarity">
    <text evidence="1">Belongs to the bacterial CoaD family.</text>
</comment>
<gene>
    <name evidence="1" type="primary">coaD</name>
    <name type="ordered locus">ECED1_4317</name>
</gene>
<proteinExistence type="inferred from homology"/>
<protein>
    <recommendedName>
        <fullName evidence="1">Phosphopantetheine adenylyltransferase</fullName>
        <ecNumber evidence="1">2.7.7.3</ecNumber>
    </recommendedName>
    <alternativeName>
        <fullName evidence="1">Dephospho-CoA pyrophosphorylase</fullName>
    </alternativeName>
    <alternativeName>
        <fullName evidence="1">Pantetheine-phosphate adenylyltransferase</fullName>
        <shortName evidence="1">PPAT</shortName>
    </alternativeName>
</protein>
<sequence length="159" mass="17895">MQKRAIYPGTFDPITNGHIDIVTRATQMFDHVILAIAASPSKKPMFTLEERVELAQQATAHLGNVEVVGFSDLMANFARNQHATVLIRGLRAVADFEYEMQLAHMNRHLMPELESVFLMPSKEWSFISSSLVKEVARHQGDVTHFLPENVHQALMAKLA</sequence>
<dbReference type="EC" id="2.7.7.3" evidence="1"/>
<dbReference type="EMBL" id="CU928162">
    <property type="protein sequence ID" value="CAR10305.1"/>
    <property type="molecule type" value="Genomic_DNA"/>
</dbReference>
<dbReference type="RefSeq" id="WP_001171873.1">
    <property type="nucleotide sequence ID" value="NC_011745.1"/>
</dbReference>
<dbReference type="SMR" id="B7N1T5"/>
<dbReference type="GeneID" id="75173828"/>
<dbReference type="KEGG" id="ecq:ECED1_4317"/>
<dbReference type="HOGENOM" id="CLU_100149_0_1_6"/>
<dbReference type="UniPathway" id="UPA00241">
    <property type="reaction ID" value="UER00355"/>
</dbReference>
<dbReference type="Proteomes" id="UP000000748">
    <property type="component" value="Chromosome"/>
</dbReference>
<dbReference type="GO" id="GO:0005737">
    <property type="term" value="C:cytoplasm"/>
    <property type="evidence" value="ECO:0007669"/>
    <property type="project" value="UniProtKB-SubCell"/>
</dbReference>
<dbReference type="GO" id="GO:0005524">
    <property type="term" value="F:ATP binding"/>
    <property type="evidence" value="ECO:0007669"/>
    <property type="project" value="UniProtKB-KW"/>
</dbReference>
<dbReference type="GO" id="GO:0004595">
    <property type="term" value="F:pantetheine-phosphate adenylyltransferase activity"/>
    <property type="evidence" value="ECO:0007669"/>
    <property type="project" value="UniProtKB-UniRule"/>
</dbReference>
<dbReference type="GO" id="GO:0015937">
    <property type="term" value="P:coenzyme A biosynthetic process"/>
    <property type="evidence" value="ECO:0007669"/>
    <property type="project" value="UniProtKB-UniRule"/>
</dbReference>
<dbReference type="CDD" id="cd02163">
    <property type="entry name" value="PPAT"/>
    <property type="match status" value="1"/>
</dbReference>
<dbReference type="FunFam" id="3.40.50.620:FF:000012">
    <property type="entry name" value="Phosphopantetheine adenylyltransferase"/>
    <property type="match status" value="1"/>
</dbReference>
<dbReference type="Gene3D" id="3.40.50.620">
    <property type="entry name" value="HUPs"/>
    <property type="match status" value="1"/>
</dbReference>
<dbReference type="HAMAP" id="MF_00151">
    <property type="entry name" value="PPAT_bact"/>
    <property type="match status" value="1"/>
</dbReference>
<dbReference type="InterPro" id="IPR004821">
    <property type="entry name" value="Cyt_trans-like"/>
</dbReference>
<dbReference type="InterPro" id="IPR001980">
    <property type="entry name" value="PPAT"/>
</dbReference>
<dbReference type="InterPro" id="IPR014729">
    <property type="entry name" value="Rossmann-like_a/b/a_fold"/>
</dbReference>
<dbReference type="NCBIfam" id="TIGR01510">
    <property type="entry name" value="coaD_prev_kdtB"/>
    <property type="match status" value="1"/>
</dbReference>
<dbReference type="NCBIfam" id="TIGR00125">
    <property type="entry name" value="cyt_tran_rel"/>
    <property type="match status" value="1"/>
</dbReference>
<dbReference type="PANTHER" id="PTHR21342">
    <property type="entry name" value="PHOSPHOPANTETHEINE ADENYLYLTRANSFERASE"/>
    <property type="match status" value="1"/>
</dbReference>
<dbReference type="PANTHER" id="PTHR21342:SF1">
    <property type="entry name" value="PHOSPHOPANTETHEINE ADENYLYLTRANSFERASE"/>
    <property type="match status" value="1"/>
</dbReference>
<dbReference type="Pfam" id="PF01467">
    <property type="entry name" value="CTP_transf_like"/>
    <property type="match status" value="1"/>
</dbReference>
<dbReference type="PRINTS" id="PR01020">
    <property type="entry name" value="LPSBIOSNTHSS"/>
</dbReference>
<dbReference type="SUPFAM" id="SSF52374">
    <property type="entry name" value="Nucleotidylyl transferase"/>
    <property type="match status" value="1"/>
</dbReference>